<dbReference type="EMBL" id="EU325680">
    <property type="protein sequence ID" value="ACF08625.1"/>
    <property type="molecule type" value="Genomic_DNA"/>
</dbReference>
<dbReference type="RefSeq" id="YP_002000472.1">
    <property type="nucleotide sequence ID" value="NC_011032.1"/>
</dbReference>
<dbReference type="SMR" id="B3TNB7"/>
<dbReference type="FunCoup" id="B3TNB7">
    <property type="interactions" value="84"/>
</dbReference>
<dbReference type="STRING" id="15368.B3TNB7"/>
<dbReference type="GeneID" id="6439853"/>
<dbReference type="KEGG" id="bdi:6439853"/>
<dbReference type="InParanoid" id="B3TNB7"/>
<dbReference type="Proteomes" id="UP000008810">
    <property type="component" value="Chloroplast"/>
</dbReference>
<dbReference type="GO" id="GO:0009535">
    <property type="term" value="C:chloroplast thylakoid membrane"/>
    <property type="evidence" value="ECO:0007669"/>
    <property type="project" value="UniProtKB-SubCell"/>
</dbReference>
<dbReference type="GO" id="GO:0009539">
    <property type="term" value="C:photosystem II reaction center"/>
    <property type="evidence" value="ECO:0007669"/>
    <property type="project" value="InterPro"/>
</dbReference>
<dbReference type="GO" id="GO:0015979">
    <property type="term" value="P:photosynthesis"/>
    <property type="evidence" value="ECO:0007669"/>
    <property type="project" value="UniProtKB-UniRule"/>
</dbReference>
<dbReference type="HAMAP" id="MF_01316">
    <property type="entry name" value="PSII_PsbI"/>
    <property type="match status" value="1"/>
</dbReference>
<dbReference type="InterPro" id="IPR003686">
    <property type="entry name" value="PSII_PsbI"/>
</dbReference>
<dbReference type="InterPro" id="IPR037271">
    <property type="entry name" value="PSII_PsbI_sf"/>
</dbReference>
<dbReference type="NCBIfam" id="NF002735">
    <property type="entry name" value="PRK02655.1"/>
    <property type="match status" value="1"/>
</dbReference>
<dbReference type="PANTHER" id="PTHR35772">
    <property type="entry name" value="PHOTOSYSTEM II REACTION CENTER PROTEIN I"/>
    <property type="match status" value="1"/>
</dbReference>
<dbReference type="PANTHER" id="PTHR35772:SF1">
    <property type="entry name" value="PHOTOSYSTEM II REACTION CENTER PROTEIN I"/>
    <property type="match status" value="1"/>
</dbReference>
<dbReference type="Pfam" id="PF02532">
    <property type="entry name" value="PsbI"/>
    <property type="match status" value="1"/>
</dbReference>
<dbReference type="SUPFAM" id="SSF161041">
    <property type="entry name" value="Photosystem II reaction center protein I, PsbI"/>
    <property type="match status" value="1"/>
</dbReference>
<reference key="1">
    <citation type="journal article" date="2008" name="BMC Res. Notes">
        <title>The complete chloroplast genome sequence of Brachypodium distachyon: sequence comparison and phylogenetic analysis of eight grass plastomes.</title>
        <authorList>
            <person name="Bortiri E."/>
            <person name="Coleman-Derr D."/>
            <person name="Lazo G.R."/>
            <person name="Anderson O.D."/>
            <person name="Gu Y.Q."/>
        </authorList>
    </citation>
    <scope>NUCLEOTIDE SEQUENCE [LARGE SCALE GENOMIC DNA]</scope>
    <source>
        <strain>cv. Bd21</strain>
    </source>
</reference>
<proteinExistence type="inferred from homology"/>
<organism>
    <name type="scientific">Brachypodium distachyon</name>
    <name type="common">Purple false brome</name>
    <name type="synonym">Trachynia distachya</name>
    <dbReference type="NCBI Taxonomy" id="15368"/>
    <lineage>
        <taxon>Eukaryota</taxon>
        <taxon>Viridiplantae</taxon>
        <taxon>Streptophyta</taxon>
        <taxon>Embryophyta</taxon>
        <taxon>Tracheophyta</taxon>
        <taxon>Spermatophyta</taxon>
        <taxon>Magnoliopsida</taxon>
        <taxon>Liliopsida</taxon>
        <taxon>Poales</taxon>
        <taxon>Poaceae</taxon>
        <taxon>BOP clade</taxon>
        <taxon>Pooideae</taxon>
        <taxon>Stipodae</taxon>
        <taxon>Brachypodieae</taxon>
        <taxon>Brachypodium</taxon>
    </lineage>
</organism>
<geneLocation type="chloroplast"/>
<gene>
    <name evidence="1" type="primary">psbI</name>
</gene>
<accession>B3TNB7</accession>
<protein>
    <recommendedName>
        <fullName evidence="1">Photosystem II reaction center protein I</fullName>
        <shortName evidence="1">PSII-I</shortName>
    </recommendedName>
    <alternativeName>
        <fullName evidence="1">PSII 4.8 kDa protein</fullName>
    </alternativeName>
</protein>
<keyword id="KW-0150">Chloroplast</keyword>
<keyword id="KW-0472">Membrane</keyword>
<keyword id="KW-0602">Photosynthesis</keyword>
<keyword id="KW-0604">Photosystem II</keyword>
<keyword id="KW-0934">Plastid</keyword>
<keyword id="KW-0674">Reaction center</keyword>
<keyword id="KW-1185">Reference proteome</keyword>
<keyword id="KW-0793">Thylakoid</keyword>
<keyword id="KW-0812">Transmembrane</keyword>
<keyword id="KW-1133">Transmembrane helix</keyword>
<name>PSBI_BRADI</name>
<comment type="function">
    <text evidence="1">One of the components of the core complex of photosystem II (PSII), required for its stability and/or assembly. PSII is a light-driven water:plastoquinone oxidoreductase that uses light energy to abstract electrons from H(2)O, generating O(2) and a proton gradient subsequently used for ATP formation. It consists of a core antenna complex that captures photons, and an electron transfer chain that converts photonic excitation into a charge separation.</text>
</comment>
<comment type="subunit">
    <text evidence="1">PSII is composed of 1 copy each of membrane proteins PsbA, PsbB, PsbC, PsbD, PsbE, PsbF, PsbH, PsbI, PsbJ, PsbK, PsbL, PsbM, PsbT, PsbX, PsbY, PsbZ, Psb30/Ycf12, at least 3 peripheral proteins of the oxygen-evolving complex and a large number of cofactors. It forms dimeric complexes.</text>
</comment>
<comment type="subcellular location">
    <subcellularLocation>
        <location evidence="1">Plastid</location>
        <location evidence="1">Chloroplast thylakoid membrane</location>
        <topology evidence="1">Single-pass membrane protein</topology>
    </subcellularLocation>
</comment>
<comment type="similarity">
    <text evidence="1">Belongs to the PsbI family.</text>
</comment>
<sequence length="36" mass="4168">MLTLKLFVYTVVIFFVSLFIFGFLSNDPGRNPGREE</sequence>
<evidence type="ECO:0000255" key="1">
    <source>
        <dbReference type="HAMAP-Rule" id="MF_01316"/>
    </source>
</evidence>
<feature type="chain" id="PRO_0000353218" description="Photosystem II reaction center protein I">
    <location>
        <begin position="1"/>
        <end position="36"/>
    </location>
</feature>
<feature type="transmembrane region" description="Helical" evidence="1">
    <location>
        <begin position="4"/>
        <end position="24"/>
    </location>
</feature>